<protein>
    <recommendedName>
        <fullName evidence="4">AP-4 complex subunit mu-1</fullName>
    </recommendedName>
    <alternativeName>
        <fullName>AP-4 adaptor complex mu subunit</fullName>
    </alternativeName>
    <alternativeName>
        <fullName>Adaptor-related protein complex 4 subunit mu-1</fullName>
    </alternativeName>
    <alternativeName>
        <fullName>Mu subunit of AP-4</fullName>
    </alternativeName>
    <alternativeName>
        <fullName>Mu-adaptin-related protein 2</fullName>
        <shortName>mu-ARP2</shortName>
    </alternativeName>
    <alternativeName>
        <fullName>Mu4-adaptin</fullName>
        <shortName>mu4</shortName>
    </alternativeName>
</protein>
<organism>
    <name type="scientific">Bos taurus</name>
    <name type="common">Bovine</name>
    <dbReference type="NCBI Taxonomy" id="9913"/>
    <lineage>
        <taxon>Eukaryota</taxon>
        <taxon>Metazoa</taxon>
        <taxon>Chordata</taxon>
        <taxon>Craniata</taxon>
        <taxon>Vertebrata</taxon>
        <taxon>Euteleostomi</taxon>
        <taxon>Mammalia</taxon>
        <taxon>Eutheria</taxon>
        <taxon>Laurasiatheria</taxon>
        <taxon>Artiodactyla</taxon>
        <taxon>Ruminantia</taxon>
        <taxon>Pecora</taxon>
        <taxon>Bovidae</taxon>
        <taxon>Bovinae</taxon>
        <taxon>Bos</taxon>
    </lineage>
</organism>
<reference key="1">
    <citation type="submission" date="2006-02" db="EMBL/GenBank/DDBJ databases">
        <authorList>
            <consortium name="NIH - Mammalian Gene Collection (MGC) project"/>
        </authorList>
    </citation>
    <scope>NUCLEOTIDE SEQUENCE [LARGE SCALE MRNA]</scope>
    <source>
        <strain>Hereford</strain>
        <tissue>Uterus</tissue>
    </source>
</reference>
<evidence type="ECO:0000250" key="1">
    <source>
        <dbReference type="UniProtKB" id="O00189"/>
    </source>
</evidence>
<evidence type="ECO:0000250" key="2">
    <source>
        <dbReference type="UniProtKB" id="Q2PWT8"/>
    </source>
</evidence>
<evidence type="ECO:0000255" key="3">
    <source>
        <dbReference type="PROSITE-ProRule" id="PRU00404"/>
    </source>
</evidence>
<evidence type="ECO:0000305" key="4"/>
<feature type="chain" id="PRO_0000283803" description="AP-4 complex subunit mu-1">
    <location>
        <begin position="1"/>
        <end position="452"/>
    </location>
</feature>
<feature type="domain" description="MHD" evidence="3">
    <location>
        <begin position="184"/>
        <end position="451"/>
    </location>
</feature>
<sequence>MISQFFILSSKGDPLIYKDFRGDSGGRDVAELFYRKLTGLPGDESPVVMHHDDRHFIHIRHSGLYLVATTSENISPFSLLELLSRLATLLGDYCGSLGEATISRNVALVYELLDEVLDYGYVQTTSTEVLRNFIQTEAVVSKPFSLFDLSSVGLFGAETQQSKVAPSSAASRPVLSSRSDQSQKNEVFLDVVERLSVLIASNGSLLKVDVQGEIRLKSFLPSGSEMRIGLTEEFCVGKSELRGYGPGIRVDEVSFHSSVYLDEFESHRILRLQPPQGELTVMRYQLSDDLPSPLPFRLFPSVQWDRGSGRLQVYLKLRCDLPPKSQALNVRLHLPLPRGVVSLSQELSSPEQKAELGEGALRWDLPRVQGGSQLSGLFQMDVPGLPGPPGQGPSASAPLGLGPASLSFELPRHTCSGLQVRFLRLAFRPCGNANPHKWVRHLSHSDAYVIRI</sequence>
<dbReference type="EMBL" id="BC113334">
    <property type="protein sequence ID" value="AAI13335.1"/>
    <property type="molecule type" value="mRNA"/>
</dbReference>
<dbReference type="RefSeq" id="NP_001070567.1">
    <property type="nucleotide sequence ID" value="NM_001077099.1"/>
</dbReference>
<dbReference type="SMR" id="Q29RY8"/>
<dbReference type="FunCoup" id="Q29RY8">
    <property type="interactions" value="4473"/>
</dbReference>
<dbReference type="STRING" id="9913.ENSBTAP00000003736"/>
<dbReference type="PaxDb" id="9913-ENSBTAP00000003736"/>
<dbReference type="GeneID" id="768040"/>
<dbReference type="KEGG" id="bta:768040"/>
<dbReference type="CTD" id="9179"/>
<dbReference type="VEuPathDB" id="HostDB:ENSBTAG00000002881"/>
<dbReference type="eggNOG" id="KOG0937">
    <property type="taxonomic scope" value="Eukaryota"/>
</dbReference>
<dbReference type="HOGENOM" id="CLU_026996_5_0_1"/>
<dbReference type="InParanoid" id="Q29RY8"/>
<dbReference type="OMA" id="DYGYIQN"/>
<dbReference type="OrthoDB" id="10259133at2759"/>
<dbReference type="TreeFam" id="TF329745"/>
<dbReference type="Reactome" id="R-BTA-432720">
    <property type="pathway name" value="Lysosome Vesicle Biogenesis"/>
</dbReference>
<dbReference type="Proteomes" id="UP000009136">
    <property type="component" value="Chromosome 25"/>
</dbReference>
<dbReference type="Bgee" id="ENSBTAG00000002881">
    <property type="expression patterns" value="Expressed in spermatid and 104 other cell types or tissues"/>
</dbReference>
<dbReference type="GO" id="GO:0030124">
    <property type="term" value="C:AP-4 adaptor complex"/>
    <property type="evidence" value="ECO:0000250"/>
    <property type="project" value="UniProtKB"/>
</dbReference>
<dbReference type="GO" id="GO:0030131">
    <property type="term" value="C:clathrin adaptor complex"/>
    <property type="evidence" value="ECO:0007669"/>
    <property type="project" value="InterPro"/>
</dbReference>
<dbReference type="GO" id="GO:0031410">
    <property type="term" value="C:cytoplasmic vesicle"/>
    <property type="evidence" value="ECO:0000318"/>
    <property type="project" value="GO_Central"/>
</dbReference>
<dbReference type="GO" id="GO:0005829">
    <property type="term" value="C:cytosol"/>
    <property type="evidence" value="ECO:0007669"/>
    <property type="project" value="GOC"/>
</dbReference>
<dbReference type="GO" id="GO:0005769">
    <property type="term" value="C:early endosome"/>
    <property type="evidence" value="ECO:0000250"/>
    <property type="project" value="UniProtKB"/>
</dbReference>
<dbReference type="GO" id="GO:0005802">
    <property type="term" value="C:trans-Golgi network"/>
    <property type="evidence" value="ECO:0000250"/>
    <property type="project" value="UniProtKB"/>
</dbReference>
<dbReference type="GO" id="GO:0000045">
    <property type="term" value="P:autophagosome assembly"/>
    <property type="evidence" value="ECO:0000250"/>
    <property type="project" value="UniProtKB"/>
</dbReference>
<dbReference type="GO" id="GO:0006895">
    <property type="term" value="P:Golgi to endosome transport"/>
    <property type="evidence" value="ECO:0000250"/>
    <property type="project" value="UniProtKB"/>
</dbReference>
<dbReference type="GO" id="GO:0090160">
    <property type="term" value="P:Golgi to lysosome transport"/>
    <property type="evidence" value="ECO:0000250"/>
    <property type="project" value="UniProtKB"/>
</dbReference>
<dbReference type="GO" id="GO:0006886">
    <property type="term" value="P:intracellular protein transport"/>
    <property type="evidence" value="ECO:0000250"/>
    <property type="project" value="UniProtKB"/>
</dbReference>
<dbReference type="GO" id="GO:0008104">
    <property type="term" value="P:protein localization"/>
    <property type="evidence" value="ECO:0000250"/>
    <property type="project" value="UniProtKB"/>
</dbReference>
<dbReference type="GO" id="GO:1903361">
    <property type="term" value="P:protein localization to basolateral plasma membrane"/>
    <property type="evidence" value="ECO:0000250"/>
    <property type="project" value="UniProtKB"/>
</dbReference>
<dbReference type="GO" id="GO:0006605">
    <property type="term" value="P:protein targeting"/>
    <property type="evidence" value="ECO:0000250"/>
    <property type="project" value="UniProtKB"/>
</dbReference>
<dbReference type="CDD" id="cd09253">
    <property type="entry name" value="AP-4_Mu4_Cterm"/>
    <property type="match status" value="1"/>
</dbReference>
<dbReference type="CDD" id="cd14838">
    <property type="entry name" value="AP4_Mu_N"/>
    <property type="match status" value="1"/>
</dbReference>
<dbReference type="FunFam" id="2.60.40.1170:FF:000021">
    <property type="entry name" value="AP-4 complex subunit mu-1 isoform X1"/>
    <property type="match status" value="1"/>
</dbReference>
<dbReference type="FunFam" id="3.30.450.60:FF:000018">
    <property type="entry name" value="AP-4 complex subunit mu-1 isoform X1"/>
    <property type="match status" value="1"/>
</dbReference>
<dbReference type="Gene3D" id="3.30.450.60">
    <property type="match status" value="1"/>
</dbReference>
<dbReference type="Gene3D" id="2.60.40.1170">
    <property type="entry name" value="Mu homology domain, subdomain B"/>
    <property type="match status" value="2"/>
</dbReference>
<dbReference type="InterPro" id="IPR050431">
    <property type="entry name" value="Adaptor_comp_med_subunit"/>
</dbReference>
<dbReference type="InterPro" id="IPR036168">
    <property type="entry name" value="AP2_Mu_C_sf"/>
</dbReference>
<dbReference type="InterPro" id="IPR022775">
    <property type="entry name" value="AP_mu_sigma_su"/>
</dbReference>
<dbReference type="InterPro" id="IPR001392">
    <property type="entry name" value="Clathrin_mu"/>
</dbReference>
<dbReference type="InterPro" id="IPR018240">
    <property type="entry name" value="Clathrin_mu_CS"/>
</dbReference>
<dbReference type="InterPro" id="IPR011012">
    <property type="entry name" value="Longin-like_dom_sf"/>
</dbReference>
<dbReference type="InterPro" id="IPR028565">
    <property type="entry name" value="MHD"/>
</dbReference>
<dbReference type="PANTHER" id="PTHR10529">
    <property type="entry name" value="AP COMPLEX SUBUNIT MU"/>
    <property type="match status" value="1"/>
</dbReference>
<dbReference type="Pfam" id="PF00928">
    <property type="entry name" value="Adap_comp_sub"/>
    <property type="match status" value="1"/>
</dbReference>
<dbReference type="Pfam" id="PF01217">
    <property type="entry name" value="Clat_adaptor_s"/>
    <property type="match status" value="1"/>
</dbReference>
<dbReference type="PIRSF" id="PIRSF005992">
    <property type="entry name" value="Clathrin_mu"/>
    <property type="match status" value="1"/>
</dbReference>
<dbReference type="PRINTS" id="PR00314">
    <property type="entry name" value="CLATHRINADPT"/>
</dbReference>
<dbReference type="SUPFAM" id="SSF49447">
    <property type="entry name" value="Second domain of Mu2 adaptin subunit (ap50) of ap2 adaptor"/>
    <property type="match status" value="1"/>
</dbReference>
<dbReference type="SUPFAM" id="SSF64356">
    <property type="entry name" value="SNARE-like"/>
    <property type="match status" value="1"/>
</dbReference>
<dbReference type="PROSITE" id="PS00991">
    <property type="entry name" value="CLAT_ADAPTOR_M_2"/>
    <property type="match status" value="1"/>
</dbReference>
<dbReference type="PROSITE" id="PS51072">
    <property type="entry name" value="MHD"/>
    <property type="match status" value="1"/>
</dbReference>
<keyword id="KW-0967">Endosome</keyword>
<keyword id="KW-0333">Golgi apparatus</keyword>
<keyword id="KW-0472">Membrane</keyword>
<keyword id="KW-0653">Protein transport</keyword>
<keyword id="KW-1185">Reference proteome</keyword>
<keyword id="KW-0813">Transport</keyword>
<proteinExistence type="evidence at transcript level"/>
<gene>
    <name evidence="1" type="primary">AP4M1</name>
</gene>
<accession>Q29RY8</accession>
<comment type="function">
    <text evidence="1">Component of the adaptor protein complex 4 (AP-4). Adaptor protein complexes are vesicle coat components involved both in vesicle formation and cargo selection. They control the vesicular transport of proteins in different trafficking pathways. AP-4 forms a non clathrin-associated coat on vesicles departing the trans-Golgi network (TGN) and may be involved in the targeting of proteins from the trans-Golgi network (TGN) to the endosomal-lysosomal system. It is also involved in protein sorting to the basolateral membrane in epithelial cells and the proper asymmetric localization of somatodendritic proteins in neurons. Within AP-4, the mu-type subunit AP4M1 is directly involved in the recognition and binding of tyrosine-based sorting signals found in the cytoplasmic part of cargos. The adaptor protein complex 4 (AP-4) may also recognize other types of sorting signal.</text>
</comment>
<comment type="subunit">
    <text evidence="1">Adaptor protein complex 4 (AP-4) is a heterotetramer composed of two large adaptins (epsilon-type subunit AP4E1 and beta-type subunit AP4B1), a medium adaptin (mu-type subunit AP4M1) and a small adaptin (sigma-type AP4S1). Interacts with tyrosine-based sorting signals on the cytoplasmic tail of cargo proteins such as APP, ATG9A, LAMP2 and NAGPA. Interacts with the C-terminal domain of GRID2. Interacts with GRIA1 and GRIA2; the interaction is indirect via CACNG3. Interacts with CACNG3; CACNG3 associates GRIA1 and GRIA2 with the adaptor protein complex 4 (AP-4) to target them to the somatodendritic compartment of neurons. Interacts with HOOK1 and HOOK2; the interactions are direct, mediate the interaction between FTS-Hook-FHIP (FHF) complex and AP-4 and the perinuclear distribution of AP-4 (By similarity).</text>
</comment>
<comment type="subcellular location">
    <subcellularLocation>
        <location evidence="1">Golgi apparatus</location>
        <location evidence="1">trans-Golgi network membrane</location>
        <topology evidence="1">Peripheral membrane protein</topology>
    </subcellularLocation>
    <subcellularLocation>
        <location evidence="1">Early endosome</location>
    </subcellularLocation>
    <text evidence="2">Found in soma and dendritic shafts of neuronal cells.</text>
</comment>
<comment type="similarity">
    <text evidence="4">Belongs to the adaptor complexes medium subunit family.</text>
</comment>
<name>AP4M1_BOVIN</name>